<name>GLN1B_PASMU</name>
<feature type="chain" id="PRO_0000153249" description="Glutamine synthetase">
    <location>
        <begin position="1"/>
        <end position="472"/>
    </location>
</feature>
<feature type="domain" description="GS beta-grasp" evidence="6">
    <location>
        <begin position="17"/>
        <end position="101"/>
    </location>
</feature>
<feature type="domain" description="GS catalytic" evidence="7">
    <location>
        <begin position="109"/>
        <end position="472"/>
    </location>
</feature>
<feature type="binding site" evidence="4">
    <location>
        <position position="134"/>
    </location>
    <ligand>
        <name>Mg(2+)</name>
        <dbReference type="ChEBI" id="CHEBI:18420"/>
        <label>1</label>
    </ligand>
</feature>
<feature type="binding site" evidence="4">
    <location>
        <position position="136"/>
    </location>
    <ligand>
        <name>Mg(2+)</name>
        <dbReference type="ChEBI" id="CHEBI:18420"/>
        <label>2</label>
    </ligand>
</feature>
<feature type="binding site" evidence="1">
    <location>
        <position position="212"/>
    </location>
    <ligand>
        <name>ATP</name>
        <dbReference type="ChEBI" id="CHEBI:30616"/>
    </ligand>
</feature>
<feature type="binding site" evidence="4">
    <location>
        <position position="217"/>
    </location>
    <ligand>
        <name>Mg(2+)</name>
        <dbReference type="ChEBI" id="CHEBI:18420"/>
        <label>2</label>
    </ligand>
</feature>
<feature type="binding site" evidence="4">
    <location>
        <position position="225"/>
    </location>
    <ligand>
        <name>Mg(2+)</name>
        <dbReference type="ChEBI" id="CHEBI:18420"/>
        <label>2</label>
    </ligand>
</feature>
<feature type="binding site" evidence="1">
    <location>
        <begin position="269"/>
        <end position="270"/>
    </location>
    <ligand>
        <name>L-glutamate</name>
        <dbReference type="ChEBI" id="CHEBI:29985"/>
    </ligand>
</feature>
<feature type="binding site" evidence="2">
    <location>
        <position position="270"/>
    </location>
    <ligand>
        <name>L-glutamate</name>
        <dbReference type="ChEBI" id="CHEBI:29985"/>
    </ligand>
</feature>
<feature type="binding site" evidence="4">
    <location>
        <position position="274"/>
    </location>
    <ligand>
        <name>Mg(2+)</name>
        <dbReference type="ChEBI" id="CHEBI:18420"/>
        <label>1</label>
    </ligand>
</feature>
<feature type="binding site" evidence="1">
    <location>
        <begin position="276"/>
        <end position="278"/>
    </location>
    <ligand>
        <name>ATP</name>
        <dbReference type="ChEBI" id="CHEBI:30616"/>
    </ligand>
</feature>
<feature type="binding site" evidence="3">
    <location>
        <position position="278"/>
    </location>
    <ligand>
        <name>ATP</name>
        <dbReference type="ChEBI" id="CHEBI:30616"/>
    </ligand>
</feature>
<feature type="binding site" evidence="1">
    <location>
        <position position="326"/>
    </location>
    <ligand>
        <name>L-glutamate</name>
        <dbReference type="ChEBI" id="CHEBI:29985"/>
    </ligand>
</feature>
<feature type="binding site" evidence="1">
    <location>
        <position position="332"/>
    </location>
    <ligand>
        <name>L-glutamate</name>
        <dbReference type="ChEBI" id="CHEBI:29985"/>
    </ligand>
</feature>
<feature type="binding site" evidence="4">
    <location>
        <position position="344"/>
    </location>
    <ligand>
        <name>ATP</name>
        <dbReference type="ChEBI" id="CHEBI:30616"/>
    </ligand>
</feature>
<feature type="binding site" evidence="4">
    <location>
        <position position="344"/>
    </location>
    <ligand>
        <name>L-glutamate</name>
        <dbReference type="ChEBI" id="CHEBI:29985"/>
    </ligand>
</feature>
<feature type="binding site" evidence="4">
    <location>
        <position position="349"/>
    </location>
    <ligand>
        <name>ATP</name>
        <dbReference type="ChEBI" id="CHEBI:30616"/>
    </ligand>
</feature>
<feature type="binding site" evidence="3">
    <location>
        <position position="357"/>
    </location>
    <ligand>
        <name>ATP</name>
        <dbReference type="ChEBI" id="CHEBI:30616"/>
    </ligand>
</feature>
<feature type="binding site" evidence="4">
    <location>
        <position position="362"/>
    </location>
    <ligand>
        <name>Mg(2+)</name>
        <dbReference type="ChEBI" id="CHEBI:18420"/>
        <label>1</label>
    </ligand>
</feature>
<feature type="binding site" evidence="1">
    <location>
        <position position="364"/>
    </location>
    <ligand>
        <name>L-glutamate</name>
        <dbReference type="ChEBI" id="CHEBI:29985"/>
    </ligand>
</feature>
<feature type="modified residue" description="O-AMP-tyrosine" evidence="4">
    <location>
        <position position="402"/>
    </location>
</feature>
<protein>
    <recommendedName>
        <fullName evidence="1">Glutamine synthetase</fullName>
        <shortName evidence="1">GS</shortName>
        <ecNumber evidence="1">6.3.1.2</ecNumber>
    </recommendedName>
    <alternativeName>
        <fullName evidence="8">Glutamate--ammonia ligase</fullName>
    </alternativeName>
    <alternativeName>
        <fullName evidence="1">Glutamine synthetase I beta</fullName>
        <shortName evidence="1">GSI beta</shortName>
    </alternativeName>
</protein>
<proteinExistence type="inferred from homology"/>
<reference key="1">
    <citation type="journal article" date="2001" name="Proc. Natl. Acad. Sci. U.S.A.">
        <title>Complete genomic sequence of Pasteurella multocida Pm70.</title>
        <authorList>
            <person name="May B.J."/>
            <person name="Zhang Q."/>
            <person name="Li L.L."/>
            <person name="Paustian M.L."/>
            <person name="Whittam T.S."/>
            <person name="Kapur V."/>
        </authorList>
    </citation>
    <scope>NUCLEOTIDE SEQUENCE [LARGE SCALE GENOMIC DNA]</scope>
    <source>
        <strain>Pm70</strain>
    </source>
</reference>
<dbReference type="EC" id="6.3.1.2" evidence="1"/>
<dbReference type="EMBL" id="AE004439">
    <property type="protein sequence ID" value="AAK03259.1"/>
    <property type="molecule type" value="Genomic_DNA"/>
</dbReference>
<dbReference type="RefSeq" id="WP_010907056.1">
    <property type="nucleotide sequence ID" value="NC_002663.1"/>
</dbReference>
<dbReference type="SMR" id="Q9CLP2"/>
<dbReference type="STRING" id="272843.PM1175"/>
<dbReference type="EnsemblBacteria" id="AAK03259">
    <property type="protein sequence ID" value="AAK03259"/>
    <property type="gene ID" value="PM1175"/>
</dbReference>
<dbReference type="KEGG" id="pmu:PM1175"/>
<dbReference type="PATRIC" id="fig|272843.6.peg.1186"/>
<dbReference type="HOGENOM" id="CLU_017290_1_2_6"/>
<dbReference type="OrthoDB" id="9807095at2"/>
<dbReference type="Proteomes" id="UP000000809">
    <property type="component" value="Chromosome"/>
</dbReference>
<dbReference type="GO" id="GO:0005737">
    <property type="term" value="C:cytoplasm"/>
    <property type="evidence" value="ECO:0007669"/>
    <property type="project" value="UniProtKB-SubCell"/>
</dbReference>
<dbReference type="GO" id="GO:0016020">
    <property type="term" value="C:membrane"/>
    <property type="evidence" value="ECO:0007669"/>
    <property type="project" value="TreeGrafter"/>
</dbReference>
<dbReference type="GO" id="GO:0005524">
    <property type="term" value="F:ATP binding"/>
    <property type="evidence" value="ECO:0007669"/>
    <property type="project" value="UniProtKB-KW"/>
</dbReference>
<dbReference type="GO" id="GO:0004356">
    <property type="term" value="F:glutamine synthetase activity"/>
    <property type="evidence" value="ECO:0007669"/>
    <property type="project" value="UniProtKB-EC"/>
</dbReference>
<dbReference type="GO" id="GO:0046872">
    <property type="term" value="F:metal ion binding"/>
    <property type="evidence" value="ECO:0007669"/>
    <property type="project" value="UniProtKB-KW"/>
</dbReference>
<dbReference type="GO" id="GO:0006542">
    <property type="term" value="P:glutamine biosynthetic process"/>
    <property type="evidence" value="ECO:0007669"/>
    <property type="project" value="InterPro"/>
</dbReference>
<dbReference type="GO" id="GO:0019740">
    <property type="term" value="P:nitrogen utilization"/>
    <property type="evidence" value="ECO:0007669"/>
    <property type="project" value="TreeGrafter"/>
</dbReference>
<dbReference type="FunFam" id="3.10.20.70:FF:000001">
    <property type="entry name" value="Glutamine synthetase"/>
    <property type="match status" value="1"/>
</dbReference>
<dbReference type="FunFam" id="3.30.590.10:FF:000001">
    <property type="entry name" value="Glutamine synthetase"/>
    <property type="match status" value="1"/>
</dbReference>
<dbReference type="Gene3D" id="3.10.20.70">
    <property type="entry name" value="Glutamine synthetase, N-terminal domain"/>
    <property type="match status" value="1"/>
</dbReference>
<dbReference type="Gene3D" id="3.30.590.10">
    <property type="entry name" value="Glutamine synthetase/guanido kinase, catalytic domain"/>
    <property type="match status" value="1"/>
</dbReference>
<dbReference type="InterPro" id="IPR008147">
    <property type="entry name" value="Gln_synt_N"/>
</dbReference>
<dbReference type="InterPro" id="IPR036651">
    <property type="entry name" value="Gln_synt_N_sf"/>
</dbReference>
<dbReference type="InterPro" id="IPR014746">
    <property type="entry name" value="Gln_synth/guanido_kin_cat_dom"/>
</dbReference>
<dbReference type="InterPro" id="IPR008146">
    <property type="entry name" value="Gln_synth_cat_dom"/>
</dbReference>
<dbReference type="InterPro" id="IPR027303">
    <property type="entry name" value="Gln_synth_gly_rich_site"/>
</dbReference>
<dbReference type="InterPro" id="IPR004809">
    <property type="entry name" value="Gln_synth_I"/>
</dbReference>
<dbReference type="InterPro" id="IPR001637">
    <property type="entry name" value="Gln_synth_I_adenylation_site"/>
</dbReference>
<dbReference type="InterPro" id="IPR027302">
    <property type="entry name" value="Gln_synth_N_conserv_site"/>
</dbReference>
<dbReference type="NCBIfam" id="TIGR00653">
    <property type="entry name" value="GlnA"/>
    <property type="match status" value="1"/>
</dbReference>
<dbReference type="NCBIfam" id="NF007006">
    <property type="entry name" value="PRK09469.1"/>
    <property type="match status" value="1"/>
</dbReference>
<dbReference type="PANTHER" id="PTHR43407">
    <property type="entry name" value="GLUTAMINE SYNTHETASE"/>
    <property type="match status" value="1"/>
</dbReference>
<dbReference type="PANTHER" id="PTHR43407:SF2">
    <property type="entry name" value="GLUTAMINE SYNTHETASE"/>
    <property type="match status" value="1"/>
</dbReference>
<dbReference type="Pfam" id="PF00120">
    <property type="entry name" value="Gln-synt_C"/>
    <property type="match status" value="1"/>
</dbReference>
<dbReference type="Pfam" id="PF03951">
    <property type="entry name" value="Gln-synt_N"/>
    <property type="match status" value="1"/>
</dbReference>
<dbReference type="SMART" id="SM01230">
    <property type="entry name" value="Gln-synt_C"/>
    <property type="match status" value="1"/>
</dbReference>
<dbReference type="SUPFAM" id="SSF54368">
    <property type="entry name" value="Glutamine synthetase, N-terminal domain"/>
    <property type="match status" value="1"/>
</dbReference>
<dbReference type="SUPFAM" id="SSF55931">
    <property type="entry name" value="Glutamine synthetase/guanido kinase"/>
    <property type="match status" value="1"/>
</dbReference>
<dbReference type="PROSITE" id="PS00180">
    <property type="entry name" value="GLNA_1"/>
    <property type="match status" value="1"/>
</dbReference>
<dbReference type="PROSITE" id="PS00182">
    <property type="entry name" value="GLNA_ADENYLATION"/>
    <property type="match status" value="1"/>
</dbReference>
<dbReference type="PROSITE" id="PS00181">
    <property type="entry name" value="GLNA_ATP"/>
    <property type="match status" value="1"/>
</dbReference>
<dbReference type="PROSITE" id="PS51986">
    <property type="entry name" value="GS_BETA_GRASP"/>
    <property type="match status" value="1"/>
</dbReference>
<dbReference type="PROSITE" id="PS51987">
    <property type="entry name" value="GS_CATALYTIC"/>
    <property type="match status" value="1"/>
</dbReference>
<comment type="function">
    <text evidence="1">Catalyzes the ATP-dependent biosynthesis of glutamine from glutamate and ammonia.</text>
</comment>
<comment type="catalytic activity">
    <reaction evidence="1">
        <text>L-glutamate + NH4(+) + ATP = L-glutamine + ADP + phosphate + H(+)</text>
        <dbReference type="Rhea" id="RHEA:16169"/>
        <dbReference type="ChEBI" id="CHEBI:15378"/>
        <dbReference type="ChEBI" id="CHEBI:28938"/>
        <dbReference type="ChEBI" id="CHEBI:29985"/>
        <dbReference type="ChEBI" id="CHEBI:30616"/>
        <dbReference type="ChEBI" id="CHEBI:43474"/>
        <dbReference type="ChEBI" id="CHEBI:58359"/>
        <dbReference type="ChEBI" id="CHEBI:456216"/>
        <dbReference type="EC" id="6.3.1.2"/>
    </reaction>
</comment>
<comment type="cofactor">
    <cofactor evidence="4">
        <name>Mg(2+)</name>
        <dbReference type="ChEBI" id="CHEBI:18420"/>
    </cofactor>
    <text evidence="4">Binds 2 Mg(2+) ions per subunit.</text>
</comment>
<comment type="activity regulation">
    <text evidence="5">The activity of this enzyme could be controlled by adenylation under conditions of abundant glutamine.</text>
</comment>
<comment type="subunit">
    <text evidence="1">Oligomer of 12 subunits arranged in the form of two hexameric ring.</text>
</comment>
<comment type="subcellular location">
    <subcellularLocation>
        <location evidence="4">Cytoplasm</location>
    </subcellularLocation>
</comment>
<comment type="similarity">
    <text evidence="8">Belongs to the glutamine synthetase family.</text>
</comment>
<gene>
    <name evidence="1" type="primary">glnA</name>
    <name type="ordered locus">PM1175</name>
</gene>
<sequence length="472" mass="52581">MSDTTAIANVFKLIEEYDIKFVLLRFTDIKGKEHGVSLPVNLVDEDLFEDGKMFDGSSVEGWKAINKADMLLMPMPETAVVDPFAQIPTLSLRCSIYEPSTMQSYDRDPRSIAIRAENYMRSTGIADEALFGPEPEFFLFDDVRFDVSMNRSSYSVDDIEAAWNTNKKYEDGNNAYRPLKKGGYCAVAPIDSAHDIRSEMCLILEEMGLVIEAHHHEVATAGQNEIATRFNTLTTKADETQIYKYVVQNVAYEHGKTACFMPKPITGDNGSGMHCNMSLSKDGKNVFQGDKYAGLSETALYYIGGIIKHAKALNAFTNPSTNSYKRLVPGFEAPVLLAYSASNRSASIRIPAVTNPKAIRIEARFPDPLANPYLAFAALLMAGLDGIINKIHPGDAMDKNLYDLPPEELQNIPAVASSLEEALNALEQDYEFLTKGNVFTQAFIDAFITIKRKEVERLNMTPHPVEFEMYYA</sequence>
<organism>
    <name type="scientific">Pasteurella multocida (strain Pm70)</name>
    <dbReference type="NCBI Taxonomy" id="272843"/>
    <lineage>
        <taxon>Bacteria</taxon>
        <taxon>Pseudomonadati</taxon>
        <taxon>Pseudomonadota</taxon>
        <taxon>Gammaproteobacteria</taxon>
        <taxon>Pasteurellales</taxon>
        <taxon>Pasteurellaceae</taxon>
        <taxon>Pasteurella</taxon>
    </lineage>
</organism>
<keyword id="KW-0067">ATP-binding</keyword>
<keyword id="KW-0963">Cytoplasm</keyword>
<keyword id="KW-0436">Ligase</keyword>
<keyword id="KW-0460">Magnesium</keyword>
<keyword id="KW-0479">Metal-binding</keyword>
<keyword id="KW-0547">Nucleotide-binding</keyword>
<keyword id="KW-0597">Phosphoprotein</keyword>
<keyword id="KW-1185">Reference proteome</keyword>
<accession>Q9CLP2</accession>
<evidence type="ECO:0000250" key="1">
    <source>
        <dbReference type="UniProtKB" id="P0A1P6"/>
    </source>
</evidence>
<evidence type="ECO:0000250" key="2">
    <source>
        <dbReference type="UniProtKB" id="P12425"/>
    </source>
</evidence>
<evidence type="ECO:0000250" key="3">
    <source>
        <dbReference type="UniProtKB" id="P77961"/>
    </source>
</evidence>
<evidence type="ECO:0000250" key="4">
    <source>
        <dbReference type="UniProtKB" id="P9WN39"/>
    </source>
</evidence>
<evidence type="ECO:0000250" key="5">
    <source>
        <dbReference type="UniProtKB" id="Q3V5W6"/>
    </source>
</evidence>
<evidence type="ECO:0000255" key="6">
    <source>
        <dbReference type="PROSITE-ProRule" id="PRU01330"/>
    </source>
</evidence>
<evidence type="ECO:0000255" key="7">
    <source>
        <dbReference type="PROSITE-ProRule" id="PRU01331"/>
    </source>
</evidence>
<evidence type="ECO:0000305" key="8"/>